<protein>
    <recommendedName>
        <fullName evidence="2">Cytochrome f</fullName>
    </recommendedName>
</protein>
<reference key="1">
    <citation type="journal article" date="2006" name="BMC Evol. Biol.">
        <title>Complete plastid genome sequences of Drimys, Liriodendron, and Piper: implications for the phylogenetic relationships of magnoliids.</title>
        <authorList>
            <person name="Cai Z."/>
            <person name="Penaflor C."/>
            <person name="Kuehl J.V."/>
            <person name="Leebens-Mack J."/>
            <person name="Carlson J.E."/>
            <person name="dePamphilis C.W."/>
            <person name="Boore J.L."/>
            <person name="Jansen R.K."/>
        </authorList>
    </citation>
    <scope>NUCLEOTIDE SEQUENCE [LARGE SCALE GENOMIC DNA]</scope>
</reference>
<accession>Q06GY4</accession>
<dbReference type="EMBL" id="DQ887676">
    <property type="protein sequence ID" value="ABH88310.1"/>
    <property type="molecule type" value="Genomic_DNA"/>
</dbReference>
<dbReference type="RefSeq" id="YP_784399.1">
    <property type="nucleotide sequence ID" value="NC_008456.1"/>
</dbReference>
<dbReference type="SMR" id="Q06GY4"/>
<dbReference type="GeneID" id="4363575"/>
<dbReference type="GO" id="GO:0009535">
    <property type="term" value="C:chloroplast thylakoid membrane"/>
    <property type="evidence" value="ECO:0007669"/>
    <property type="project" value="UniProtKB-SubCell"/>
</dbReference>
<dbReference type="GO" id="GO:0009055">
    <property type="term" value="F:electron transfer activity"/>
    <property type="evidence" value="ECO:0007669"/>
    <property type="project" value="UniProtKB-UniRule"/>
</dbReference>
<dbReference type="GO" id="GO:0020037">
    <property type="term" value="F:heme binding"/>
    <property type="evidence" value="ECO:0007669"/>
    <property type="project" value="InterPro"/>
</dbReference>
<dbReference type="GO" id="GO:0005506">
    <property type="term" value="F:iron ion binding"/>
    <property type="evidence" value="ECO:0007669"/>
    <property type="project" value="InterPro"/>
</dbReference>
<dbReference type="GO" id="GO:0015979">
    <property type="term" value="P:photosynthesis"/>
    <property type="evidence" value="ECO:0007669"/>
    <property type="project" value="UniProtKB-UniRule"/>
</dbReference>
<dbReference type="FunFam" id="1.20.5.700:FF:000001">
    <property type="entry name" value="Cytochrome f"/>
    <property type="match status" value="1"/>
</dbReference>
<dbReference type="FunFam" id="2.40.50.100:FF:000007">
    <property type="entry name" value="Cytochrome f"/>
    <property type="match status" value="1"/>
</dbReference>
<dbReference type="FunFam" id="2.60.40.830:FF:000001">
    <property type="entry name" value="Cytochrome f"/>
    <property type="match status" value="1"/>
</dbReference>
<dbReference type="Gene3D" id="2.40.50.100">
    <property type="match status" value="1"/>
</dbReference>
<dbReference type="Gene3D" id="2.60.40.830">
    <property type="entry name" value="Cytochrome f large domain"/>
    <property type="match status" value="1"/>
</dbReference>
<dbReference type="Gene3D" id="1.20.5.700">
    <property type="entry name" value="Single helix bin"/>
    <property type="match status" value="1"/>
</dbReference>
<dbReference type="HAMAP" id="MF_00610">
    <property type="entry name" value="Cytb6_f_cytF"/>
    <property type="match status" value="1"/>
</dbReference>
<dbReference type="InterPro" id="IPR024058">
    <property type="entry name" value="Cyt-f_TM"/>
</dbReference>
<dbReference type="InterPro" id="IPR002325">
    <property type="entry name" value="Cyt_f"/>
</dbReference>
<dbReference type="InterPro" id="IPR024094">
    <property type="entry name" value="Cyt_f_lg_dom"/>
</dbReference>
<dbReference type="InterPro" id="IPR036826">
    <property type="entry name" value="Cyt_f_lg_dom_sf"/>
</dbReference>
<dbReference type="InterPro" id="IPR011054">
    <property type="entry name" value="Rudment_hybrid_motif"/>
</dbReference>
<dbReference type="PANTHER" id="PTHR33288">
    <property type="match status" value="1"/>
</dbReference>
<dbReference type="PANTHER" id="PTHR33288:SF10">
    <property type="entry name" value="CYTOCHROME F"/>
    <property type="match status" value="1"/>
</dbReference>
<dbReference type="Pfam" id="PF01333">
    <property type="entry name" value="Apocytochr_F_C"/>
    <property type="match status" value="1"/>
</dbReference>
<dbReference type="Pfam" id="PF16639">
    <property type="entry name" value="Apocytochr_F_N"/>
    <property type="match status" value="1"/>
</dbReference>
<dbReference type="PRINTS" id="PR00610">
    <property type="entry name" value="CYTOCHROMEF"/>
</dbReference>
<dbReference type="SUPFAM" id="SSF103431">
    <property type="entry name" value="Cytochrome f subunit of the cytochrome b6f complex, transmembrane anchor"/>
    <property type="match status" value="1"/>
</dbReference>
<dbReference type="SUPFAM" id="SSF49441">
    <property type="entry name" value="Cytochrome f, large domain"/>
    <property type="match status" value="1"/>
</dbReference>
<dbReference type="SUPFAM" id="SSF51246">
    <property type="entry name" value="Rudiment single hybrid motif"/>
    <property type="match status" value="1"/>
</dbReference>
<dbReference type="PROSITE" id="PS51010">
    <property type="entry name" value="CYTF"/>
    <property type="match status" value="1"/>
</dbReference>
<comment type="function">
    <text evidence="2">Component of the cytochrome b6-f complex, which mediates electron transfer between photosystem II (PSII) and photosystem I (PSI), cyclic electron flow around PSI, and state transitions.</text>
</comment>
<comment type="cofactor">
    <cofactor evidence="2">
        <name>heme</name>
        <dbReference type="ChEBI" id="CHEBI:30413"/>
    </cofactor>
    <text evidence="2">Binds 1 heme group covalently.</text>
</comment>
<comment type="subunit">
    <text evidence="1">The 4 large subunits of the cytochrome b6-f complex are cytochrome b6, subunit IV (17 kDa polypeptide, petD), cytochrome f and the Rieske protein, while the 4 small subunits are PetG, PetL, PetM and PetN. The complex functions as a dimer (By similarity).</text>
</comment>
<comment type="subcellular location">
    <subcellularLocation>
        <location evidence="2">Plastid</location>
        <location evidence="2">Chloroplast thylakoid membrane</location>
        <topology evidence="2">Single-pass membrane protein</topology>
    </subcellularLocation>
</comment>
<comment type="similarity">
    <text evidence="2">Belongs to the cytochrome f family.</text>
</comment>
<sequence>MQNRNTFSWVKEQMTRFISVSIMIYVITRTSISNAYPIFAQQGYENPREATGRIVCANCHLANKPVDIEVPQAVLPDTVFEAVVRIPYDMQLKQVLANGKKGSLNVGAVLILPDGFELAPPDRISPEMKEKIGNLSFQSYRPTKKNILVIGPVPGQKYSEIVFPILSPDPATKKDVNFLKYPIYVGGNRGRGQIYPDGSKSNNTVYNATGAGIVSRIVRKEKGGYEITIADASDGHQVIDIIPPGPELLVSEGESIKLDQPLTNNPNVGGFGQGDAEIVLQDPLRVQGLLFFLASVILAQIFLVLKKKQFEKVQLSEMNF</sequence>
<gene>
    <name evidence="2" type="primary">petA</name>
</gene>
<organism>
    <name type="scientific">Drimys granadensis</name>
    <dbReference type="NCBI Taxonomy" id="224735"/>
    <lineage>
        <taxon>Eukaryota</taxon>
        <taxon>Viridiplantae</taxon>
        <taxon>Streptophyta</taxon>
        <taxon>Embryophyta</taxon>
        <taxon>Tracheophyta</taxon>
        <taxon>Spermatophyta</taxon>
        <taxon>Magnoliopsida</taxon>
        <taxon>Magnoliidae</taxon>
        <taxon>Canellales</taxon>
        <taxon>Winteraceae</taxon>
        <taxon>Drimys</taxon>
    </lineage>
</organism>
<proteinExistence type="inferred from homology"/>
<keyword id="KW-0150">Chloroplast</keyword>
<keyword id="KW-0249">Electron transport</keyword>
<keyword id="KW-0349">Heme</keyword>
<keyword id="KW-0408">Iron</keyword>
<keyword id="KW-0472">Membrane</keyword>
<keyword id="KW-0479">Metal-binding</keyword>
<keyword id="KW-0602">Photosynthesis</keyword>
<keyword id="KW-0934">Plastid</keyword>
<keyword id="KW-0732">Signal</keyword>
<keyword id="KW-0793">Thylakoid</keyword>
<keyword id="KW-0812">Transmembrane</keyword>
<keyword id="KW-1133">Transmembrane helix</keyword>
<keyword id="KW-0813">Transport</keyword>
<feature type="signal peptide" evidence="2">
    <location>
        <begin position="1"/>
        <end position="35"/>
    </location>
</feature>
<feature type="chain" id="PRO_0000275411" description="Cytochrome f">
    <location>
        <begin position="36"/>
        <end position="320"/>
    </location>
</feature>
<feature type="transmembrane region" description="Helical" evidence="2">
    <location>
        <begin position="286"/>
        <end position="306"/>
    </location>
</feature>
<feature type="binding site" description="axial binding residue" evidence="2">
    <location>
        <position position="36"/>
    </location>
    <ligand>
        <name>heme</name>
        <dbReference type="ChEBI" id="CHEBI:30413"/>
    </ligand>
    <ligandPart>
        <name>Fe</name>
        <dbReference type="ChEBI" id="CHEBI:18248"/>
    </ligandPart>
</feature>
<feature type="binding site" description="covalent" evidence="2">
    <location>
        <position position="56"/>
    </location>
    <ligand>
        <name>heme</name>
        <dbReference type="ChEBI" id="CHEBI:30413"/>
    </ligand>
</feature>
<feature type="binding site" description="covalent" evidence="2">
    <location>
        <position position="59"/>
    </location>
    <ligand>
        <name>heme</name>
        <dbReference type="ChEBI" id="CHEBI:30413"/>
    </ligand>
</feature>
<feature type="binding site" description="axial binding residue" evidence="2">
    <location>
        <position position="60"/>
    </location>
    <ligand>
        <name>heme</name>
        <dbReference type="ChEBI" id="CHEBI:30413"/>
    </ligand>
    <ligandPart>
        <name>Fe</name>
        <dbReference type="ChEBI" id="CHEBI:18248"/>
    </ligandPart>
</feature>
<geneLocation type="chloroplast"/>
<name>CYF_DRIGR</name>
<evidence type="ECO:0000250" key="1"/>
<evidence type="ECO:0000255" key="2">
    <source>
        <dbReference type="HAMAP-Rule" id="MF_00610"/>
    </source>
</evidence>